<evidence type="ECO:0000250" key="1"/>
<evidence type="ECO:0000305" key="2"/>
<feature type="chain" id="PRO_0000060345" description="tRNA (guanine-N(1)-)-methyltransferase">
    <location>
        <begin position="1"/>
        <end position="237"/>
    </location>
</feature>
<feature type="binding site" evidence="1">
    <location>
        <position position="122"/>
    </location>
    <ligand>
        <name>S-adenosyl-L-methionine</name>
        <dbReference type="ChEBI" id="CHEBI:59789"/>
    </ligand>
</feature>
<feature type="binding site" evidence="1">
    <location>
        <begin position="142"/>
        <end position="147"/>
    </location>
    <ligand>
        <name>S-adenosyl-L-methionine</name>
        <dbReference type="ChEBI" id="CHEBI:59789"/>
    </ligand>
</feature>
<reference key="1">
    <citation type="journal article" date="2000" name="Nature">
        <title>Genome sequence of the endocellular bacterial symbiont of aphids Buchnera sp. APS.</title>
        <authorList>
            <person name="Shigenobu S."/>
            <person name="Watanabe H."/>
            <person name="Hattori M."/>
            <person name="Sakaki Y."/>
            <person name="Ishikawa H."/>
        </authorList>
    </citation>
    <scope>NUCLEOTIDE SEQUENCE [LARGE SCALE GENOMIC DNA]</scope>
    <source>
        <strain>APS</strain>
    </source>
</reference>
<name>TRMD_BUCAI</name>
<comment type="function">
    <text evidence="1">Specifically methylates guanosine-37 in various tRNAs.</text>
</comment>
<comment type="catalytic activity">
    <reaction>
        <text>guanosine(37) in tRNA + S-adenosyl-L-methionine = N(1)-methylguanosine(37) in tRNA + S-adenosyl-L-homocysteine + H(+)</text>
        <dbReference type="Rhea" id="RHEA:36899"/>
        <dbReference type="Rhea" id="RHEA-COMP:10145"/>
        <dbReference type="Rhea" id="RHEA-COMP:10147"/>
        <dbReference type="ChEBI" id="CHEBI:15378"/>
        <dbReference type="ChEBI" id="CHEBI:57856"/>
        <dbReference type="ChEBI" id="CHEBI:59789"/>
        <dbReference type="ChEBI" id="CHEBI:73542"/>
        <dbReference type="ChEBI" id="CHEBI:74269"/>
        <dbReference type="EC" id="2.1.1.228"/>
    </reaction>
</comment>
<comment type="subunit">
    <text evidence="1">Homodimer.</text>
</comment>
<comment type="subcellular location">
    <subcellularLocation>
        <location evidence="2">Cytoplasm</location>
    </subcellularLocation>
</comment>
<comment type="similarity">
    <text evidence="2">Belongs to the RNA methyltransferase TrmD family.</text>
</comment>
<accession>P57476</accession>
<protein>
    <recommendedName>
        <fullName>tRNA (guanine-N(1)-)-methyltransferase</fullName>
        <ecNumber>2.1.1.228</ecNumber>
    </recommendedName>
    <alternativeName>
        <fullName>M1G-methyltransferase</fullName>
    </alternativeName>
    <alternativeName>
        <fullName>tRNA [GM37] methyltransferase</fullName>
    </alternativeName>
</protein>
<proteinExistence type="inferred from homology"/>
<dbReference type="EC" id="2.1.1.228"/>
<dbReference type="EMBL" id="BA000003">
    <property type="protein sequence ID" value="BAB13099.1"/>
    <property type="molecule type" value="Genomic_DNA"/>
</dbReference>
<dbReference type="RefSeq" id="NP_240213.1">
    <property type="nucleotide sequence ID" value="NC_002528.1"/>
</dbReference>
<dbReference type="RefSeq" id="WP_009874353.1">
    <property type="nucleotide sequence ID" value="NZ_AP036055.1"/>
</dbReference>
<dbReference type="SMR" id="P57476"/>
<dbReference type="STRING" id="563178.BUAP5A_389"/>
<dbReference type="EnsemblBacteria" id="BAB13099">
    <property type="protein sequence ID" value="BAB13099"/>
    <property type="gene ID" value="BAB13099"/>
</dbReference>
<dbReference type="KEGG" id="buc:BU396"/>
<dbReference type="PATRIC" id="fig|107806.10.peg.410"/>
<dbReference type="eggNOG" id="COG0336">
    <property type="taxonomic scope" value="Bacteria"/>
</dbReference>
<dbReference type="HOGENOM" id="CLU_047363_0_1_6"/>
<dbReference type="Proteomes" id="UP000001806">
    <property type="component" value="Chromosome"/>
</dbReference>
<dbReference type="GO" id="GO:0005829">
    <property type="term" value="C:cytosol"/>
    <property type="evidence" value="ECO:0007669"/>
    <property type="project" value="TreeGrafter"/>
</dbReference>
<dbReference type="GO" id="GO:0052906">
    <property type="term" value="F:tRNA (guanine(37)-N1)-methyltransferase activity"/>
    <property type="evidence" value="ECO:0007669"/>
    <property type="project" value="UniProtKB-UniRule"/>
</dbReference>
<dbReference type="GO" id="GO:0002939">
    <property type="term" value="P:tRNA N1-guanine methylation"/>
    <property type="evidence" value="ECO:0007669"/>
    <property type="project" value="TreeGrafter"/>
</dbReference>
<dbReference type="CDD" id="cd18080">
    <property type="entry name" value="TrmD-like"/>
    <property type="match status" value="1"/>
</dbReference>
<dbReference type="FunFam" id="1.10.1270.20:FF:000001">
    <property type="entry name" value="tRNA (guanine-N(1)-)-methyltransferase"/>
    <property type="match status" value="1"/>
</dbReference>
<dbReference type="FunFam" id="3.40.1280.10:FF:000001">
    <property type="entry name" value="tRNA (guanine-N(1)-)-methyltransferase"/>
    <property type="match status" value="1"/>
</dbReference>
<dbReference type="Gene3D" id="3.40.1280.10">
    <property type="match status" value="1"/>
</dbReference>
<dbReference type="Gene3D" id="1.10.1270.20">
    <property type="entry name" value="tRNA(m1g37)methyltransferase, domain 2"/>
    <property type="match status" value="1"/>
</dbReference>
<dbReference type="HAMAP" id="MF_00605">
    <property type="entry name" value="TrmD"/>
    <property type="match status" value="1"/>
</dbReference>
<dbReference type="InterPro" id="IPR029028">
    <property type="entry name" value="Alpha/beta_knot_MTases"/>
</dbReference>
<dbReference type="InterPro" id="IPR023148">
    <property type="entry name" value="tRNA_m1G_MeTrfase_C_sf"/>
</dbReference>
<dbReference type="InterPro" id="IPR002649">
    <property type="entry name" value="tRNA_m1G_MeTrfase_TrmD"/>
</dbReference>
<dbReference type="InterPro" id="IPR029026">
    <property type="entry name" value="tRNA_m1G_MTases_N"/>
</dbReference>
<dbReference type="InterPro" id="IPR016009">
    <property type="entry name" value="tRNA_MeTrfase_TRMD/TRM10"/>
</dbReference>
<dbReference type="NCBIfam" id="NF000648">
    <property type="entry name" value="PRK00026.1"/>
    <property type="match status" value="1"/>
</dbReference>
<dbReference type="NCBIfam" id="TIGR00088">
    <property type="entry name" value="trmD"/>
    <property type="match status" value="1"/>
</dbReference>
<dbReference type="PANTHER" id="PTHR46417">
    <property type="entry name" value="TRNA (GUANINE-N(1)-)-METHYLTRANSFERASE"/>
    <property type="match status" value="1"/>
</dbReference>
<dbReference type="PANTHER" id="PTHR46417:SF1">
    <property type="entry name" value="TRNA (GUANINE-N(1)-)-METHYLTRANSFERASE"/>
    <property type="match status" value="1"/>
</dbReference>
<dbReference type="Pfam" id="PF01746">
    <property type="entry name" value="tRNA_m1G_MT"/>
    <property type="match status" value="1"/>
</dbReference>
<dbReference type="PIRSF" id="PIRSF000386">
    <property type="entry name" value="tRNA_mtase"/>
    <property type="match status" value="1"/>
</dbReference>
<dbReference type="SUPFAM" id="SSF75217">
    <property type="entry name" value="alpha/beta knot"/>
    <property type="match status" value="1"/>
</dbReference>
<sequence length="237" mass="27335">MKKKYNETIICFNIITIFPEMFYAITNYGIIGQAIKKKIININFFNPRNFSKNKYKSVDDRPYGGGPGMLMSFEPLYLAIQQAKSTSKNVTVIYLSPQGKELKQNHIEELLVKKKKIVFICGRYEGIDQRIIDNQVDEEWSIGSYILTGGELAAMVMIDAISRLIPGVIKTKKSIEEDSFTNDLLDYPNYTRPKIIKNMSVPQVLLSGNHNEIRLWRLKQSLGTTWIKRPDLIKKKY</sequence>
<keyword id="KW-0963">Cytoplasm</keyword>
<keyword id="KW-0489">Methyltransferase</keyword>
<keyword id="KW-1185">Reference proteome</keyword>
<keyword id="KW-0949">S-adenosyl-L-methionine</keyword>
<keyword id="KW-0808">Transferase</keyword>
<keyword id="KW-0819">tRNA processing</keyword>
<organism>
    <name type="scientific">Buchnera aphidicola subsp. Acyrthosiphon pisum (strain APS)</name>
    <name type="common">Acyrthosiphon pisum symbiotic bacterium</name>
    <dbReference type="NCBI Taxonomy" id="107806"/>
    <lineage>
        <taxon>Bacteria</taxon>
        <taxon>Pseudomonadati</taxon>
        <taxon>Pseudomonadota</taxon>
        <taxon>Gammaproteobacteria</taxon>
        <taxon>Enterobacterales</taxon>
        <taxon>Erwiniaceae</taxon>
        <taxon>Buchnera</taxon>
    </lineage>
</organism>
<gene>
    <name type="primary">trmD</name>
    <name type="ordered locus">BU396</name>
</gene>